<protein>
    <recommendedName>
        <fullName evidence="1">Undecaprenyl-diphosphatase</fullName>
        <ecNumber evidence="1">3.6.1.27</ecNumber>
    </recommendedName>
    <alternativeName>
        <fullName evidence="1">Bacitracin resistance protein</fullName>
    </alternativeName>
    <alternativeName>
        <fullName evidence="1">Undecaprenyl pyrophosphate phosphatase</fullName>
    </alternativeName>
</protein>
<proteinExistence type="inferred from homology"/>
<feature type="chain" id="PRO_0000290722" description="Undecaprenyl-diphosphatase">
    <location>
        <begin position="1"/>
        <end position="281"/>
    </location>
</feature>
<feature type="transmembrane region" description="Helical" evidence="1">
    <location>
        <begin position="2"/>
        <end position="22"/>
    </location>
</feature>
<feature type="transmembrane region" description="Helical" evidence="1">
    <location>
        <begin position="46"/>
        <end position="66"/>
    </location>
</feature>
<feature type="transmembrane region" description="Helical" evidence="1">
    <location>
        <begin position="93"/>
        <end position="113"/>
    </location>
</feature>
<feature type="transmembrane region" description="Helical" evidence="1">
    <location>
        <begin position="115"/>
        <end position="135"/>
    </location>
</feature>
<feature type="transmembrane region" description="Helical" evidence="1">
    <location>
        <begin position="152"/>
        <end position="172"/>
    </location>
</feature>
<feature type="transmembrane region" description="Helical" evidence="1">
    <location>
        <begin position="190"/>
        <end position="210"/>
    </location>
</feature>
<feature type="transmembrane region" description="Helical" evidence="1">
    <location>
        <begin position="228"/>
        <end position="248"/>
    </location>
</feature>
<feature type="transmembrane region" description="Helical" evidence="1">
    <location>
        <begin position="259"/>
        <end position="279"/>
    </location>
</feature>
<evidence type="ECO:0000255" key="1">
    <source>
        <dbReference type="HAMAP-Rule" id="MF_01006"/>
    </source>
</evidence>
<evidence type="ECO:0000305" key="2"/>
<reference key="1">
    <citation type="journal article" date="2006" name="Proc. Natl. Acad. Sci. U.S.A.">
        <title>Comparative genomics of the lactic acid bacteria.</title>
        <authorList>
            <person name="Makarova K.S."/>
            <person name="Slesarev A."/>
            <person name="Wolf Y.I."/>
            <person name="Sorokin A."/>
            <person name="Mirkin B."/>
            <person name="Koonin E.V."/>
            <person name="Pavlov A."/>
            <person name="Pavlova N."/>
            <person name="Karamychev V."/>
            <person name="Polouchine N."/>
            <person name="Shakhova V."/>
            <person name="Grigoriev I."/>
            <person name="Lou Y."/>
            <person name="Rohksar D."/>
            <person name="Lucas S."/>
            <person name="Huang K."/>
            <person name="Goodstein D.M."/>
            <person name="Hawkins T."/>
            <person name="Plengvidhya V."/>
            <person name="Welker D."/>
            <person name="Hughes J."/>
            <person name="Goh Y."/>
            <person name="Benson A."/>
            <person name="Baldwin K."/>
            <person name="Lee J.-H."/>
            <person name="Diaz-Muniz I."/>
            <person name="Dosti B."/>
            <person name="Smeianov V."/>
            <person name="Wechter W."/>
            <person name="Barabote R."/>
            <person name="Lorca G."/>
            <person name="Altermann E."/>
            <person name="Barrangou R."/>
            <person name="Ganesan B."/>
            <person name="Xie Y."/>
            <person name="Rawsthorne H."/>
            <person name="Tamir D."/>
            <person name="Parker C."/>
            <person name="Breidt F."/>
            <person name="Broadbent J.R."/>
            <person name="Hutkins R."/>
            <person name="O'Sullivan D."/>
            <person name="Steele J."/>
            <person name="Unlu G."/>
            <person name="Saier M.H. Jr."/>
            <person name="Klaenhammer T."/>
            <person name="Richardson P."/>
            <person name="Kozyavkin S."/>
            <person name="Weimer B.C."/>
            <person name="Mills D.A."/>
        </authorList>
    </citation>
    <scope>NUCLEOTIDE SEQUENCE [LARGE SCALE GENOMIC DNA]</scope>
    <source>
        <strain>ATCC 8293 / DSM 20343 / BCRC 11652 / CCM 1803 / JCM 6124 / NCDO 523 / NBRC 100496 / NCIMB 8023 / NCTC 12954 / NRRL B-1118 / 37Y</strain>
    </source>
</reference>
<organism>
    <name type="scientific">Leuconostoc mesenteroides subsp. mesenteroides (strain ATCC 8293 / DSM 20343 / BCRC 11652 / CCM 1803 / JCM 6124 / NCDO 523 / NBRC 100496 / NCIMB 8023 / NCTC 12954 / NRRL B-1118 / 37Y)</name>
    <dbReference type="NCBI Taxonomy" id="203120"/>
    <lineage>
        <taxon>Bacteria</taxon>
        <taxon>Bacillati</taxon>
        <taxon>Bacillota</taxon>
        <taxon>Bacilli</taxon>
        <taxon>Lactobacillales</taxon>
        <taxon>Lactobacillaceae</taxon>
        <taxon>Leuconostoc</taxon>
    </lineage>
</organism>
<comment type="function">
    <text evidence="1">Catalyzes the dephosphorylation of undecaprenyl diphosphate (UPP). Confers resistance to bacitracin.</text>
</comment>
<comment type="catalytic activity">
    <reaction evidence="1">
        <text>di-trans,octa-cis-undecaprenyl diphosphate + H2O = di-trans,octa-cis-undecaprenyl phosphate + phosphate + H(+)</text>
        <dbReference type="Rhea" id="RHEA:28094"/>
        <dbReference type="ChEBI" id="CHEBI:15377"/>
        <dbReference type="ChEBI" id="CHEBI:15378"/>
        <dbReference type="ChEBI" id="CHEBI:43474"/>
        <dbReference type="ChEBI" id="CHEBI:58405"/>
        <dbReference type="ChEBI" id="CHEBI:60392"/>
        <dbReference type="EC" id="3.6.1.27"/>
    </reaction>
</comment>
<comment type="subcellular location">
    <subcellularLocation>
        <location evidence="1">Cell membrane</location>
        <topology evidence="1">Multi-pass membrane protein</topology>
    </subcellularLocation>
</comment>
<comment type="miscellaneous">
    <text>Bacitracin is thought to be involved in the inhibition of peptidoglycan synthesis by sequestering undecaprenyl diphosphate, thereby reducing the pool of lipid carrier available.</text>
</comment>
<comment type="similarity">
    <text evidence="1">Belongs to the UppP family.</text>
</comment>
<comment type="sequence caution" evidence="2">
    <conflict type="erroneous initiation">
        <sequence resource="EMBL-CDS" id="ABJ61283"/>
    </conflict>
</comment>
<gene>
    <name evidence="1" type="primary">uppP</name>
    <name type="ordered locus">LEUM_0133</name>
</gene>
<sequence length="281" mass="31301">MFDLIKAIIIGIIEGLTEFLPVSSTGHIILAEALMKIPSGNVWTKAFSSVFDYSIQLGAIFAVIQLYFDKLNPFSSKKTDHEKFQTWRLWIRVIVGVLPAIVFGFALNDFMDAHLMNFWVVSATLIIYGIAFIVIENRQKSIVPVITNVNQITFKLALYIGLFQVLSIVPGTSRSGATILGAIILGASRFVAAEFSFFLSIPVMFGVTFLKMGSFFRDGGSFTGMQSIVMLVGFIVSWIVAWFAIKFMMNYIKNNDFKVFGYYRIIIGAIFLVFGILGIVG</sequence>
<dbReference type="EC" id="3.6.1.27" evidence="1"/>
<dbReference type="EMBL" id="CP000414">
    <property type="protein sequence ID" value="ABJ61283.1"/>
    <property type="status" value="ALT_INIT"/>
    <property type="molecule type" value="Genomic_DNA"/>
</dbReference>
<dbReference type="RefSeq" id="WP_041775143.1">
    <property type="nucleotide sequence ID" value="NC_008531.1"/>
</dbReference>
<dbReference type="SMR" id="Q03ZT9"/>
<dbReference type="EnsemblBacteria" id="ABJ61283">
    <property type="protein sequence ID" value="ABJ61283"/>
    <property type="gene ID" value="LEUM_0133"/>
</dbReference>
<dbReference type="GeneID" id="29577341"/>
<dbReference type="KEGG" id="lme:LEUM_0133"/>
<dbReference type="eggNOG" id="COG1968">
    <property type="taxonomic scope" value="Bacteria"/>
</dbReference>
<dbReference type="HOGENOM" id="CLU_060296_2_0_9"/>
<dbReference type="Proteomes" id="UP000000362">
    <property type="component" value="Chromosome"/>
</dbReference>
<dbReference type="GO" id="GO:0005886">
    <property type="term" value="C:plasma membrane"/>
    <property type="evidence" value="ECO:0007669"/>
    <property type="project" value="UniProtKB-SubCell"/>
</dbReference>
<dbReference type="GO" id="GO:0050380">
    <property type="term" value="F:undecaprenyl-diphosphatase activity"/>
    <property type="evidence" value="ECO:0007669"/>
    <property type="project" value="UniProtKB-UniRule"/>
</dbReference>
<dbReference type="GO" id="GO:0071555">
    <property type="term" value="P:cell wall organization"/>
    <property type="evidence" value="ECO:0007669"/>
    <property type="project" value="UniProtKB-KW"/>
</dbReference>
<dbReference type="GO" id="GO:0009252">
    <property type="term" value="P:peptidoglycan biosynthetic process"/>
    <property type="evidence" value="ECO:0007669"/>
    <property type="project" value="UniProtKB-KW"/>
</dbReference>
<dbReference type="GO" id="GO:0008360">
    <property type="term" value="P:regulation of cell shape"/>
    <property type="evidence" value="ECO:0007669"/>
    <property type="project" value="UniProtKB-KW"/>
</dbReference>
<dbReference type="GO" id="GO:0046677">
    <property type="term" value="P:response to antibiotic"/>
    <property type="evidence" value="ECO:0007669"/>
    <property type="project" value="UniProtKB-UniRule"/>
</dbReference>
<dbReference type="HAMAP" id="MF_01006">
    <property type="entry name" value="Undec_diphosphatase"/>
    <property type="match status" value="1"/>
</dbReference>
<dbReference type="InterPro" id="IPR003824">
    <property type="entry name" value="UppP"/>
</dbReference>
<dbReference type="NCBIfam" id="NF001391">
    <property type="entry name" value="PRK00281.1-5"/>
    <property type="match status" value="1"/>
</dbReference>
<dbReference type="PANTHER" id="PTHR30622">
    <property type="entry name" value="UNDECAPRENYL-DIPHOSPHATASE"/>
    <property type="match status" value="1"/>
</dbReference>
<dbReference type="PANTHER" id="PTHR30622:SF3">
    <property type="entry name" value="UNDECAPRENYL-DIPHOSPHATASE"/>
    <property type="match status" value="1"/>
</dbReference>
<dbReference type="Pfam" id="PF02673">
    <property type="entry name" value="BacA"/>
    <property type="match status" value="1"/>
</dbReference>
<accession>Q03ZT9</accession>
<keyword id="KW-0046">Antibiotic resistance</keyword>
<keyword id="KW-1003">Cell membrane</keyword>
<keyword id="KW-0133">Cell shape</keyword>
<keyword id="KW-0961">Cell wall biogenesis/degradation</keyword>
<keyword id="KW-0378">Hydrolase</keyword>
<keyword id="KW-0472">Membrane</keyword>
<keyword id="KW-0573">Peptidoglycan synthesis</keyword>
<keyword id="KW-1185">Reference proteome</keyword>
<keyword id="KW-0812">Transmembrane</keyword>
<keyword id="KW-1133">Transmembrane helix</keyword>
<name>UPPP_LEUMM</name>